<proteinExistence type="inferred from homology"/>
<gene>
    <name evidence="1" type="primary">proS</name>
    <name type="ordered locus">Gbem_2891</name>
</gene>
<keyword id="KW-0030">Aminoacyl-tRNA synthetase</keyword>
<keyword id="KW-0067">ATP-binding</keyword>
<keyword id="KW-0963">Cytoplasm</keyword>
<keyword id="KW-0436">Ligase</keyword>
<keyword id="KW-0547">Nucleotide-binding</keyword>
<keyword id="KW-0648">Protein biosynthesis</keyword>
<keyword id="KW-1185">Reference proteome</keyword>
<evidence type="ECO:0000255" key="1">
    <source>
        <dbReference type="HAMAP-Rule" id="MF_01569"/>
    </source>
</evidence>
<dbReference type="EC" id="6.1.1.15" evidence="1"/>
<dbReference type="EMBL" id="CP001124">
    <property type="protein sequence ID" value="ACH39894.1"/>
    <property type="molecule type" value="Genomic_DNA"/>
</dbReference>
<dbReference type="RefSeq" id="WP_012531319.1">
    <property type="nucleotide sequence ID" value="NC_011146.1"/>
</dbReference>
<dbReference type="SMR" id="B5EIT9"/>
<dbReference type="STRING" id="404380.Gbem_2891"/>
<dbReference type="KEGG" id="gbm:Gbem_2891"/>
<dbReference type="eggNOG" id="COG0442">
    <property type="taxonomic scope" value="Bacteria"/>
</dbReference>
<dbReference type="HOGENOM" id="CLU_016739_0_0_7"/>
<dbReference type="OrthoDB" id="9809052at2"/>
<dbReference type="Proteomes" id="UP000008825">
    <property type="component" value="Chromosome"/>
</dbReference>
<dbReference type="GO" id="GO:0005829">
    <property type="term" value="C:cytosol"/>
    <property type="evidence" value="ECO:0007669"/>
    <property type="project" value="TreeGrafter"/>
</dbReference>
<dbReference type="GO" id="GO:0002161">
    <property type="term" value="F:aminoacyl-tRNA deacylase activity"/>
    <property type="evidence" value="ECO:0007669"/>
    <property type="project" value="InterPro"/>
</dbReference>
<dbReference type="GO" id="GO:0005524">
    <property type="term" value="F:ATP binding"/>
    <property type="evidence" value="ECO:0007669"/>
    <property type="project" value="UniProtKB-UniRule"/>
</dbReference>
<dbReference type="GO" id="GO:0004827">
    <property type="term" value="F:proline-tRNA ligase activity"/>
    <property type="evidence" value="ECO:0007669"/>
    <property type="project" value="UniProtKB-UniRule"/>
</dbReference>
<dbReference type="GO" id="GO:0006433">
    <property type="term" value="P:prolyl-tRNA aminoacylation"/>
    <property type="evidence" value="ECO:0007669"/>
    <property type="project" value="UniProtKB-UniRule"/>
</dbReference>
<dbReference type="CDD" id="cd04334">
    <property type="entry name" value="ProRS-INS"/>
    <property type="match status" value="1"/>
</dbReference>
<dbReference type="CDD" id="cd00861">
    <property type="entry name" value="ProRS_anticodon_short"/>
    <property type="match status" value="1"/>
</dbReference>
<dbReference type="CDD" id="cd00779">
    <property type="entry name" value="ProRS_core_prok"/>
    <property type="match status" value="1"/>
</dbReference>
<dbReference type="FunFam" id="3.30.930.10:FF:000012">
    <property type="entry name" value="Proline--tRNA ligase"/>
    <property type="match status" value="1"/>
</dbReference>
<dbReference type="FunFam" id="3.30.930.10:FF:000065">
    <property type="entry name" value="Proline--tRNA ligase"/>
    <property type="match status" value="1"/>
</dbReference>
<dbReference type="Gene3D" id="3.40.50.800">
    <property type="entry name" value="Anticodon-binding domain"/>
    <property type="match status" value="1"/>
</dbReference>
<dbReference type="Gene3D" id="3.30.930.10">
    <property type="entry name" value="Bira Bifunctional Protein, Domain 2"/>
    <property type="match status" value="2"/>
</dbReference>
<dbReference type="Gene3D" id="3.90.960.10">
    <property type="entry name" value="YbaK/aminoacyl-tRNA synthetase-associated domain"/>
    <property type="match status" value="1"/>
</dbReference>
<dbReference type="HAMAP" id="MF_01569">
    <property type="entry name" value="Pro_tRNA_synth_type1"/>
    <property type="match status" value="1"/>
</dbReference>
<dbReference type="InterPro" id="IPR002314">
    <property type="entry name" value="aa-tRNA-synt_IIb"/>
</dbReference>
<dbReference type="InterPro" id="IPR006195">
    <property type="entry name" value="aa-tRNA-synth_II"/>
</dbReference>
<dbReference type="InterPro" id="IPR045864">
    <property type="entry name" value="aa-tRNA-synth_II/BPL/LPL"/>
</dbReference>
<dbReference type="InterPro" id="IPR004154">
    <property type="entry name" value="Anticodon-bd"/>
</dbReference>
<dbReference type="InterPro" id="IPR036621">
    <property type="entry name" value="Anticodon-bd_dom_sf"/>
</dbReference>
<dbReference type="InterPro" id="IPR002316">
    <property type="entry name" value="Pro-tRNA-ligase_IIa"/>
</dbReference>
<dbReference type="InterPro" id="IPR004500">
    <property type="entry name" value="Pro-tRNA-synth_IIa_bac-type"/>
</dbReference>
<dbReference type="InterPro" id="IPR023717">
    <property type="entry name" value="Pro-tRNA-Synthase_IIa_type1"/>
</dbReference>
<dbReference type="InterPro" id="IPR050062">
    <property type="entry name" value="Pro-tRNA_synthetase"/>
</dbReference>
<dbReference type="InterPro" id="IPR044140">
    <property type="entry name" value="ProRS_anticodon_short"/>
</dbReference>
<dbReference type="InterPro" id="IPR033730">
    <property type="entry name" value="ProRS_core_prok"/>
</dbReference>
<dbReference type="InterPro" id="IPR036754">
    <property type="entry name" value="YbaK/aa-tRNA-synt-asso_dom_sf"/>
</dbReference>
<dbReference type="InterPro" id="IPR007214">
    <property type="entry name" value="YbaK/aa-tRNA-synth-assoc-dom"/>
</dbReference>
<dbReference type="NCBIfam" id="NF006625">
    <property type="entry name" value="PRK09194.1"/>
    <property type="match status" value="1"/>
</dbReference>
<dbReference type="NCBIfam" id="TIGR00409">
    <property type="entry name" value="proS_fam_II"/>
    <property type="match status" value="1"/>
</dbReference>
<dbReference type="PANTHER" id="PTHR42753">
    <property type="entry name" value="MITOCHONDRIAL RIBOSOME PROTEIN L39/PROLYL-TRNA LIGASE FAMILY MEMBER"/>
    <property type="match status" value="1"/>
</dbReference>
<dbReference type="PANTHER" id="PTHR42753:SF2">
    <property type="entry name" value="PROLINE--TRNA LIGASE"/>
    <property type="match status" value="1"/>
</dbReference>
<dbReference type="Pfam" id="PF03129">
    <property type="entry name" value="HGTP_anticodon"/>
    <property type="match status" value="1"/>
</dbReference>
<dbReference type="Pfam" id="PF00587">
    <property type="entry name" value="tRNA-synt_2b"/>
    <property type="match status" value="1"/>
</dbReference>
<dbReference type="Pfam" id="PF04073">
    <property type="entry name" value="tRNA_edit"/>
    <property type="match status" value="1"/>
</dbReference>
<dbReference type="PIRSF" id="PIRSF001535">
    <property type="entry name" value="ProRS_1"/>
    <property type="match status" value="1"/>
</dbReference>
<dbReference type="PRINTS" id="PR01046">
    <property type="entry name" value="TRNASYNTHPRO"/>
</dbReference>
<dbReference type="SUPFAM" id="SSF52954">
    <property type="entry name" value="Class II aaRS ABD-related"/>
    <property type="match status" value="1"/>
</dbReference>
<dbReference type="SUPFAM" id="SSF55681">
    <property type="entry name" value="Class II aaRS and biotin synthetases"/>
    <property type="match status" value="1"/>
</dbReference>
<dbReference type="SUPFAM" id="SSF55826">
    <property type="entry name" value="YbaK/ProRS associated domain"/>
    <property type="match status" value="1"/>
</dbReference>
<dbReference type="PROSITE" id="PS50862">
    <property type="entry name" value="AA_TRNA_LIGASE_II"/>
    <property type="match status" value="1"/>
</dbReference>
<comment type="function">
    <text evidence="1">Catalyzes the attachment of proline to tRNA(Pro) in a two-step reaction: proline is first activated by ATP to form Pro-AMP and then transferred to the acceptor end of tRNA(Pro). As ProRS can inadvertently accommodate and process non-cognate amino acids such as alanine and cysteine, to avoid such errors it has two additional distinct editing activities against alanine. One activity is designated as 'pretransfer' editing and involves the tRNA(Pro)-independent hydrolysis of activated Ala-AMP. The other activity is designated 'posttransfer' editing and involves deacylation of mischarged Ala-tRNA(Pro). The misacylated Cys-tRNA(Pro) is not edited by ProRS.</text>
</comment>
<comment type="catalytic activity">
    <reaction evidence="1">
        <text>tRNA(Pro) + L-proline + ATP = L-prolyl-tRNA(Pro) + AMP + diphosphate</text>
        <dbReference type="Rhea" id="RHEA:14305"/>
        <dbReference type="Rhea" id="RHEA-COMP:9700"/>
        <dbReference type="Rhea" id="RHEA-COMP:9702"/>
        <dbReference type="ChEBI" id="CHEBI:30616"/>
        <dbReference type="ChEBI" id="CHEBI:33019"/>
        <dbReference type="ChEBI" id="CHEBI:60039"/>
        <dbReference type="ChEBI" id="CHEBI:78442"/>
        <dbReference type="ChEBI" id="CHEBI:78532"/>
        <dbReference type="ChEBI" id="CHEBI:456215"/>
        <dbReference type="EC" id="6.1.1.15"/>
    </reaction>
</comment>
<comment type="subunit">
    <text evidence="1">Homodimer.</text>
</comment>
<comment type="subcellular location">
    <subcellularLocation>
        <location evidence="1">Cytoplasm</location>
    </subcellularLocation>
</comment>
<comment type="domain">
    <text evidence="1">Consists of three domains: the N-terminal catalytic domain, the editing domain and the C-terminal anticodon-binding domain.</text>
</comment>
<comment type="similarity">
    <text evidence="1">Belongs to the class-II aminoacyl-tRNA synthetase family. ProS type 1 subfamily.</text>
</comment>
<feature type="chain" id="PRO_1000199389" description="Proline--tRNA ligase">
    <location>
        <begin position="1"/>
        <end position="573"/>
    </location>
</feature>
<sequence>MRYSQYFIPTVKETPSDAEVISHKLMLRAGMIRKLAAGIYNYLPFGLRSIRKVEAIVREEMNRAGAIELLMPAVQPAELWKESGRWEFYGKELLRFNDRKDAEFCMGPTHEEVITDLIRKEVRSYRQLPINLYQIQGKFRDEIRPRFGLMRGREFIMKDAYSFDVNEAGADVSYEKMYKAYRRIFERCGLKFRAVEADTGTIGGSYSHEFMVLADSGEDAIVSCSACEYAANMEKAETRKGEGIEHADPRPMEHVSTPGQKSIEDVATFLGVQNTQVVKTLVLVADGEPVVALIRGDYDLNEIKLKNHLGCAELEMAEDDVVVKVTGAPTGYAGPVGLAAKVKVVADLSLEGMHNFVTGANAADTHLKNVNIGRDFSVSGFVDIRNVVIGDACPRCDSGKLEIWRGIEVGHVFKLGTKYSKALKATFLDADGKEQIIFMGCYGIGVGRTVAACIEQNHDENGIIFPIPIAPFQCIISSLSAKEDEVKAASESIYQELLEAGIEVLLDDRDERPGFKFKDADLIGIPLRIVVGAKALAEGKVELKERRSGEVEVLPIAEAIAKVKAAVKEALQV</sequence>
<accession>B5EIT9</accession>
<protein>
    <recommendedName>
        <fullName evidence="1">Proline--tRNA ligase</fullName>
        <ecNumber evidence="1">6.1.1.15</ecNumber>
    </recommendedName>
    <alternativeName>
        <fullName evidence="1">Prolyl-tRNA synthetase</fullName>
        <shortName evidence="1">ProRS</shortName>
    </alternativeName>
</protein>
<reference key="1">
    <citation type="submission" date="2008-07" db="EMBL/GenBank/DDBJ databases">
        <title>Complete sequence of Geobacter bemidjiensis BEM.</title>
        <authorList>
            <consortium name="US DOE Joint Genome Institute"/>
            <person name="Lucas S."/>
            <person name="Copeland A."/>
            <person name="Lapidus A."/>
            <person name="Glavina del Rio T."/>
            <person name="Dalin E."/>
            <person name="Tice H."/>
            <person name="Bruce D."/>
            <person name="Goodwin L."/>
            <person name="Pitluck S."/>
            <person name="Kiss H."/>
            <person name="Brettin T."/>
            <person name="Detter J.C."/>
            <person name="Han C."/>
            <person name="Kuske C.R."/>
            <person name="Schmutz J."/>
            <person name="Larimer F."/>
            <person name="Land M."/>
            <person name="Hauser L."/>
            <person name="Kyrpides N."/>
            <person name="Lykidis A."/>
            <person name="Lovley D."/>
            <person name="Richardson P."/>
        </authorList>
    </citation>
    <scope>NUCLEOTIDE SEQUENCE [LARGE SCALE GENOMIC DNA]</scope>
    <source>
        <strain>ATCC BAA-1014 / DSM 16622 / JCM 12645 / Bem</strain>
    </source>
</reference>
<name>SYP_CITBB</name>
<organism>
    <name type="scientific">Citrifermentans bemidjiense (strain ATCC BAA-1014 / DSM 16622 / JCM 12645 / Bem)</name>
    <name type="common">Geobacter bemidjiensis</name>
    <dbReference type="NCBI Taxonomy" id="404380"/>
    <lineage>
        <taxon>Bacteria</taxon>
        <taxon>Pseudomonadati</taxon>
        <taxon>Thermodesulfobacteriota</taxon>
        <taxon>Desulfuromonadia</taxon>
        <taxon>Geobacterales</taxon>
        <taxon>Geobacteraceae</taxon>
        <taxon>Citrifermentans</taxon>
    </lineage>
</organism>